<gene>
    <name type="primary">Ttyh2</name>
</gene>
<sequence length="532" mass="59008">MPAARVEYIAPWWVVWLHSVPHLGLRLQRVDSTFSPGDETYQESLLFLGVLAAIGLGLNLIFLTVYLVCTCCCRRDHTVQTKQQESCCVTWTAVVAGLLCCAAVGVGFYGNSETNDGMHQLIYSLDNANHTFSGMDELVSANTQRMKVDLEQHLARLSEIIAARGDYIQTLKFMQQMAGNVVSQLSGLPVWREVTTQLTKLSHQTAYVEYYRWLSYLLLFILDLVICLVTCLGLARRSKCLLASMLCCGILTLILSWASLAADAAAAVGTSDFCMAPDIYILNNTGSQINSEVTRYYLHCSQSLISPFQQSLTTFQRSLTTMQIQVGGLLQFAVPLFPTAEKDLLGIQLLLNNSEISLHQLTAMLDCRGLHKDYLDALTGICYDGIEGLLFLGLFSLLAALAFSTLTCAGPRAWKYFINRDRDYDDIDDDDPFNPQARRIAAHNPTRGQLHSFCSYSSGLGSQCSLQPPSQTISNAPVSEYMNQAILFGGNPRYENVPLIGRGSPPPTYSPSMRPTYMSVADEHLRHYEFPS</sequence>
<proteinExistence type="evidence at protein level"/>
<reference key="1">
    <citation type="journal article" date="2001" name="Genomics">
        <title>TTYH2, a human homologue of the Drosophila melanogaster gene tweety, is located on 17q24 and upregulated in renal cell carcinoma.</title>
        <authorList>
            <person name="Rae F.K."/>
            <person name="Hooper J.D."/>
            <person name="Eyre H.J."/>
            <person name="Sutherland G.R."/>
            <person name="Nicol D.L."/>
            <person name="Clements J.A."/>
        </authorList>
    </citation>
    <scope>NUCLEOTIDE SEQUENCE [MRNA] (ISOFORM 1)</scope>
</reference>
<reference key="2">
    <citation type="journal article" date="2005" name="Science">
        <title>The transcriptional landscape of the mammalian genome.</title>
        <authorList>
            <person name="Carninci P."/>
            <person name="Kasukawa T."/>
            <person name="Katayama S."/>
            <person name="Gough J."/>
            <person name="Frith M.C."/>
            <person name="Maeda N."/>
            <person name="Oyama R."/>
            <person name="Ravasi T."/>
            <person name="Lenhard B."/>
            <person name="Wells C."/>
            <person name="Kodzius R."/>
            <person name="Shimokawa K."/>
            <person name="Bajic V.B."/>
            <person name="Brenner S.E."/>
            <person name="Batalov S."/>
            <person name="Forrest A.R."/>
            <person name="Zavolan M."/>
            <person name="Davis M.J."/>
            <person name="Wilming L.G."/>
            <person name="Aidinis V."/>
            <person name="Allen J.E."/>
            <person name="Ambesi-Impiombato A."/>
            <person name="Apweiler R."/>
            <person name="Aturaliya R.N."/>
            <person name="Bailey T.L."/>
            <person name="Bansal M."/>
            <person name="Baxter L."/>
            <person name="Beisel K.W."/>
            <person name="Bersano T."/>
            <person name="Bono H."/>
            <person name="Chalk A.M."/>
            <person name="Chiu K.P."/>
            <person name="Choudhary V."/>
            <person name="Christoffels A."/>
            <person name="Clutterbuck D.R."/>
            <person name="Crowe M.L."/>
            <person name="Dalla E."/>
            <person name="Dalrymple B.P."/>
            <person name="de Bono B."/>
            <person name="Della Gatta G."/>
            <person name="di Bernardo D."/>
            <person name="Down T."/>
            <person name="Engstrom P."/>
            <person name="Fagiolini M."/>
            <person name="Faulkner G."/>
            <person name="Fletcher C.F."/>
            <person name="Fukushima T."/>
            <person name="Furuno M."/>
            <person name="Futaki S."/>
            <person name="Gariboldi M."/>
            <person name="Georgii-Hemming P."/>
            <person name="Gingeras T.R."/>
            <person name="Gojobori T."/>
            <person name="Green R.E."/>
            <person name="Gustincich S."/>
            <person name="Harbers M."/>
            <person name="Hayashi Y."/>
            <person name="Hensch T.K."/>
            <person name="Hirokawa N."/>
            <person name="Hill D."/>
            <person name="Huminiecki L."/>
            <person name="Iacono M."/>
            <person name="Ikeo K."/>
            <person name="Iwama A."/>
            <person name="Ishikawa T."/>
            <person name="Jakt M."/>
            <person name="Kanapin A."/>
            <person name="Katoh M."/>
            <person name="Kawasawa Y."/>
            <person name="Kelso J."/>
            <person name="Kitamura H."/>
            <person name="Kitano H."/>
            <person name="Kollias G."/>
            <person name="Krishnan S.P."/>
            <person name="Kruger A."/>
            <person name="Kummerfeld S.K."/>
            <person name="Kurochkin I.V."/>
            <person name="Lareau L.F."/>
            <person name="Lazarevic D."/>
            <person name="Lipovich L."/>
            <person name="Liu J."/>
            <person name="Liuni S."/>
            <person name="McWilliam S."/>
            <person name="Madan Babu M."/>
            <person name="Madera M."/>
            <person name="Marchionni L."/>
            <person name="Matsuda H."/>
            <person name="Matsuzawa S."/>
            <person name="Miki H."/>
            <person name="Mignone F."/>
            <person name="Miyake S."/>
            <person name="Morris K."/>
            <person name="Mottagui-Tabar S."/>
            <person name="Mulder N."/>
            <person name="Nakano N."/>
            <person name="Nakauchi H."/>
            <person name="Ng P."/>
            <person name="Nilsson R."/>
            <person name="Nishiguchi S."/>
            <person name="Nishikawa S."/>
            <person name="Nori F."/>
            <person name="Ohara O."/>
            <person name="Okazaki Y."/>
            <person name="Orlando V."/>
            <person name="Pang K.C."/>
            <person name="Pavan W.J."/>
            <person name="Pavesi G."/>
            <person name="Pesole G."/>
            <person name="Petrovsky N."/>
            <person name="Piazza S."/>
            <person name="Reed J."/>
            <person name="Reid J.F."/>
            <person name="Ring B.Z."/>
            <person name="Ringwald M."/>
            <person name="Rost B."/>
            <person name="Ruan Y."/>
            <person name="Salzberg S.L."/>
            <person name="Sandelin A."/>
            <person name="Schneider C."/>
            <person name="Schoenbach C."/>
            <person name="Sekiguchi K."/>
            <person name="Semple C.A."/>
            <person name="Seno S."/>
            <person name="Sessa L."/>
            <person name="Sheng Y."/>
            <person name="Shibata Y."/>
            <person name="Shimada H."/>
            <person name="Shimada K."/>
            <person name="Silva D."/>
            <person name="Sinclair B."/>
            <person name="Sperling S."/>
            <person name="Stupka E."/>
            <person name="Sugiura K."/>
            <person name="Sultana R."/>
            <person name="Takenaka Y."/>
            <person name="Taki K."/>
            <person name="Tammoja K."/>
            <person name="Tan S.L."/>
            <person name="Tang S."/>
            <person name="Taylor M.S."/>
            <person name="Tegner J."/>
            <person name="Teichmann S.A."/>
            <person name="Ueda H.R."/>
            <person name="van Nimwegen E."/>
            <person name="Verardo R."/>
            <person name="Wei C.L."/>
            <person name="Yagi K."/>
            <person name="Yamanishi H."/>
            <person name="Zabarovsky E."/>
            <person name="Zhu S."/>
            <person name="Zimmer A."/>
            <person name="Hide W."/>
            <person name="Bult C."/>
            <person name="Grimmond S.M."/>
            <person name="Teasdale R.D."/>
            <person name="Liu E.T."/>
            <person name="Brusic V."/>
            <person name="Quackenbush J."/>
            <person name="Wahlestedt C."/>
            <person name="Mattick J.S."/>
            <person name="Hume D.A."/>
            <person name="Kai C."/>
            <person name="Sasaki D."/>
            <person name="Tomaru Y."/>
            <person name="Fukuda S."/>
            <person name="Kanamori-Katayama M."/>
            <person name="Suzuki M."/>
            <person name="Aoki J."/>
            <person name="Arakawa T."/>
            <person name="Iida J."/>
            <person name="Imamura K."/>
            <person name="Itoh M."/>
            <person name="Kato T."/>
            <person name="Kawaji H."/>
            <person name="Kawagashira N."/>
            <person name="Kawashima T."/>
            <person name="Kojima M."/>
            <person name="Kondo S."/>
            <person name="Konno H."/>
            <person name="Nakano K."/>
            <person name="Ninomiya N."/>
            <person name="Nishio T."/>
            <person name="Okada M."/>
            <person name="Plessy C."/>
            <person name="Shibata K."/>
            <person name="Shiraki T."/>
            <person name="Suzuki S."/>
            <person name="Tagami M."/>
            <person name="Waki K."/>
            <person name="Watahiki A."/>
            <person name="Okamura-Oho Y."/>
            <person name="Suzuki H."/>
            <person name="Kawai J."/>
            <person name="Hayashizaki Y."/>
        </authorList>
    </citation>
    <scope>NUCLEOTIDE SEQUENCE [LARGE SCALE MRNA] (ISOFORMS 1 AND 2)</scope>
    <source>
        <strain>C57BL/6J</strain>
        <strain>NOD</strain>
        <tissue>Bone marrow</tissue>
        <tissue>Heart</tissue>
        <tissue>Spleen</tissue>
    </source>
</reference>
<reference key="3">
    <citation type="journal article" date="2009" name="PLoS Biol.">
        <title>Lineage-specific biology revealed by a finished genome assembly of the mouse.</title>
        <authorList>
            <person name="Church D.M."/>
            <person name="Goodstadt L."/>
            <person name="Hillier L.W."/>
            <person name="Zody M.C."/>
            <person name="Goldstein S."/>
            <person name="She X."/>
            <person name="Bult C.J."/>
            <person name="Agarwala R."/>
            <person name="Cherry J.L."/>
            <person name="DiCuccio M."/>
            <person name="Hlavina W."/>
            <person name="Kapustin Y."/>
            <person name="Meric P."/>
            <person name="Maglott D."/>
            <person name="Birtle Z."/>
            <person name="Marques A.C."/>
            <person name="Graves T."/>
            <person name="Zhou S."/>
            <person name="Teague B."/>
            <person name="Potamousis K."/>
            <person name="Churas C."/>
            <person name="Place M."/>
            <person name="Herschleb J."/>
            <person name="Runnheim R."/>
            <person name="Forrest D."/>
            <person name="Amos-Landgraf J."/>
            <person name="Schwartz D.C."/>
            <person name="Cheng Z."/>
            <person name="Lindblad-Toh K."/>
            <person name="Eichler E.E."/>
            <person name="Ponting C.P."/>
        </authorList>
    </citation>
    <scope>NUCLEOTIDE SEQUENCE [LARGE SCALE GENOMIC DNA]</scope>
    <source>
        <strain>C57BL/6J</strain>
    </source>
</reference>
<reference key="4">
    <citation type="journal article" date="2004" name="Genome Res.">
        <title>The status, quality, and expansion of the NIH full-length cDNA project: the Mammalian Gene Collection (MGC).</title>
        <authorList>
            <consortium name="The MGC Project Team"/>
        </authorList>
    </citation>
    <scope>NUCLEOTIDE SEQUENCE [LARGE SCALE MRNA] (ISOFORM 1)</scope>
    <source>
        <strain>FVB/N</strain>
        <tissue>Liver</tissue>
    </source>
</reference>
<reference key="5">
    <citation type="journal article" date="2010" name="Cell">
        <title>A tissue-specific atlas of mouse protein phosphorylation and expression.</title>
        <authorList>
            <person name="Huttlin E.L."/>
            <person name="Jedrychowski M.P."/>
            <person name="Elias J.E."/>
            <person name="Goswami T."/>
            <person name="Rad R."/>
            <person name="Beausoleil S.A."/>
            <person name="Villen J."/>
            <person name="Haas W."/>
            <person name="Sowa M.E."/>
            <person name="Gygi S.P."/>
        </authorList>
    </citation>
    <scope>PHOSPHORYLATION [LARGE SCALE ANALYSIS] AT SER-504</scope>
    <scope>IDENTIFICATION BY MASS SPECTROMETRY [LARGE SCALE ANALYSIS]</scope>
    <source>
        <tissue>Testis</tissue>
    </source>
</reference>
<reference key="6">
    <citation type="journal article" date="2019" name="Exp. Neurobiol.">
        <title>Tweety-homolog (Ttyh) Family Encodes the Pore-forming Subunits of the Swelling-dependent Volume-regulated Anion Channel (VRACswell) in the Brain.</title>
        <authorList>
            <person name="Han Y.E."/>
            <person name="Kwon J."/>
            <person name="Won J."/>
            <person name="An H."/>
            <person name="Jang M.W."/>
            <person name="Woo J."/>
            <person name="Lee J.S."/>
            <person name="Park M.G."/>
            <person name="Yoon B.E."/>
            <person name="Lee S.E."/>
            <person name="Hwang E.M."/>
            <person name="Jung J.Y."/>
            <person name="Park H."/>
            <person name="Oh S.J."/>
            <person name="Lee C.J."/>
        </authorList>
    </citation>
    <scope>FUNCTION</scope>
    <scope>TRANSPORTER ACTIVITY</scope>
    <scope>ACTIVITY REGULATION</scope>
    <scope>SUBCELLULAR LOCATION</scope>
    <scope>MUTAGENESIS OF ARG-164</scope>
    <scope>SITE</scope>
</reference>
<reference evidence="10 11 12" key="7">
    <citation type="journal article" date="2021" name="Nat. Commun.">
        <title>Structures of tweety homolog proteins TTYH2 and TTYH3 reveal a Ca2+-dependent switch from intra- to intermembrane dimerization.</title>
        <authorList>
            <person name="Li B."/>
            <person name="Hoel C.M."/>
            <person name="Brohawn S.G."/>
        </authorList>
    </citation>
    <scope>STRUCTURE BY ELECTRON MICROSCOPY (3.50 ANGSTROMS) OF 2-532</scope>
    <scope>SUBUNIT</scope>
    <scope>CALCIUM-BINDING</scope>
    <scope>RGD MOTIF</scope>
    <scope>DISULFIDE BOND</scope>
    <scope>GLYCOSYLATION AT ASN-129 AND ASN-352</scope>
    <scope>CAUTION</scope>
</reference>
<feature type="chain" id="PRO_0000312247" description="Protein tweety homolog 2">
    <location>
        <begin position="1"/>
        <end position="532"/>
    </location>
</feature>
<feature type="topological domain" description="Extracellular" evidence="3">
    <location>
        <begin position="1"/>
        <end position="44"/>
    </location>
</feature>
<feature type="transmembrane region" description="Helical; Name=1" evidence="3">
    <location>
        <begin position="45"/>
        <end position="65"/>
    </location>
</feature>
<feature type="topological domain" description="Cytoplasmic" evidence="3">
    <location>
        <begin position="66"/>
        <end position="87"/>
    </location>
</feature>
<feature type="transmembrane region" description="Helical; Name=2" evidence="3">
    <location>
        <begin position="88"/>
        <end position="108"/>
    </location>
</feature>
<feature type="topological domain" description="Extracellular" evidence="3">
    <location>
        <begin position="109"/>
        <end position="213"/>
    </location>
</feature>
<feature type="transmembrane region" description="Helical; Name=3" evidence="3">
    <location>
        <begin position="214"/>
        <end position="234"/>
    </location>
</feature>
<feature type="topological domain" description="Cytoplasmic" evidence="3">
    <location>
        <begin position="235"/>
        <end position="240"/>
    </location>
</feature>
<feature type="transmembrane region" description="Helical; Name=4" evidence="3">
    <location>
        <begin position="241"/>
        <end position="261"/>
    </location>
</feature>
<feature type="topological domain" description="Extracellular" evidence="3">
    <location>
        <begin position="262"/>
        <end position="385"/>
    </location>
</feature>
<feature type="transmembrane region" description="Helical; Name=5" evidence="3">
    <location>
        <begin position="386"/>
        <end position="406"/>
    </location>
</feature>
<feature type="topological domain" description="Cytoplasmic" evidence="3">
    <location>
        <begin position="407"/>
        <end position="532"/>
    </location>
</feature>
<feature type="short sequence motif" description="RGD" evidence="5">
    <location>
        <begin position="164"/>
        <end position="166"/>
    </location>
</feature>
<feature type="short sequence motif" description="PY-motif; mediates interaction with NEDD4L" evidence="2">
    <location>
        <begin position="506"/>
        <end position="509"/>
    </location>
</feature>
<feature type="binding site" evidence="5 10">
    <location>
        <position position="113"/>
    </location>
    <ligand>
        <name>Ca(2+)</name>
        <dbReference type="ChEBI" id="CHEBI:29108"/>
    </ligand>
</feature>
<feature type="binding site" evidence="5 10">
    <location>
        <position position="116"/>
    </location>
    <ligand>
        <name>Ca(2+)</name>
        <dbReference type="ChEBI" id="CHEBI:29108"/>
    </ligand>
</feature>
<feature type="site" description="Essential for the formation of the channel-pore" evidence="4">
    <location>
        <position position="164"/>
    </location>
</feature>
<feature type="modified residue" description="Phosphothreonine" evidence="2">
    <location>
        <position position="199"/>
    </location>
</feature>
<feature type="modified residue" description="Phosphoserine" evidence="13">
    <location>
        <position position="504"/>
    </location>
</feature>
<feature type="glycosylation site" description="N-linked (GlcNAc...) asparagine" evidence="5">
    <location>
        <position position="129"/>
    </location>
</feature>
<feature type="glycosylation site" description="N-linked (GlcNAc...) asparagine" evidence="3">
    <location>
        <position position="283"/>
    </location>
</feature>
<feature type="glycosylation site" description="N-linked (GlcNAc...) asparagine" evidence="5">
    <location>
        <position position="352"/>
    </location>
</feature>
<feature type="disulfide bond" evidence="5">
    <location>
        <begin position="274"/>
        <end position="382"/>
    </location>
</feature>
<feature type="disulfide bond" evidence="5">
    <location>
        <begin position="300"/>
        <end position="367"/>
    </location>
</feature>
<feature type="splice variant" id="VSP_029768" description="In isoform 2." evidence="6">
    <location>
        <begin position="421"/>
        <end position="482"/>
    </location>
</feature>
<feature type="mutagenesis site" description="Significant decrease in hypo-osmotic solution-induced chloride conductance but no effect on cell membrane localization." evidence="4">
    <original>R</original>
    <variation>A</variation>
    <location>
        <position position="164"/>
    </location>
</feature>
<feature type="sequence conflict" description="In Ref. 1; AAL16785." evidence="8" ref="1">
    <original>RVD</original>
    <variation>DEY</variation>
    <location>
        <begin position="29"/>
        <end position="31"/>
    </location>
</feature>
<feature type="sequence conflict" description="In Ref. 2; BAE31004." evidence="8" ref="2">
    <original>G</original>
    <variation>V</variation>
    <location>
        <position position="107"/>
    </location>
</feature>
<feature type="sequence conflict" description="In Ref. 2; BAE33698." evidence="8" ref="2">
    <original>H</original>
    <variation>R</variation>
    <location>
        <position position="119"/>
    </location>
</feature>
<feature type="sequence conflict" description="In Ref. 4; AAH60740." evidence="8" ref="4">
    <original>A</original>
    <variation>E</variation>
    <location>
        <position position="178"/>
    </location>
</feature>
<feature type="sequence conflict" description="In Ref. 4; AAH60740." evidence="8" ref="4">
    <original>S</original>
    <variation>F</variation>
    <location>
        <position position="259"/>
    </location>
</feature>
<feature type="sequence conflict" description="In Ref. 1; AAL16785." evidence="8" ref="1">
    <original>D</original>
    <variation>R</variation>
    <location>
        <position position="343"/>
    </location>
</feature>
<feature type="sequence conflict" description="In Ref. 1; AAL16785." evidence="8" ref="1">
    <original>LHQLTA</original>
    <variation>CTVDR</variation>
    <location>
        <begin position="358"/>
        <end position="363"/>
    </location>
</feature>
<feature type="helix" evidence="14">
    <location>
        <begin position="12"/>
        <end position="18"/>
    </location>
</feature>
<feature type="turn" evidence="14">
    <location>
        <begin position="24"/>
        <end position="26"/>
    </location>
</feature>
<feature type="helix" evidence="14">
    <location>
        <begin position="39"/>
        <end position="71"/>
    </location>
</feature>
<feature type="helix" evidence="14">
    <location>
        <begin position="90"/>
        <end position="157"/>
    </location>
</feature>
<feature type="helix" evidence="14">
    <location>
        <begin position="166"/>
        <end position="187"/>
    </location>
</feature>
<feature type="helix" evidence="14">
    <location>
        <begin position="192"/>
        <end position="234"/>
    </location>
</feature>
<feature type="turn" evidence="14">
    <location>
        <begin position="235"/>
        <end position="237"/>
    </location>
</feature>
<feature type="helix" evidence="14">
    <location>
        <begin position="240"/>
        <end position="269"/>
    </location>
</feature>
<feature type="helix" evidence="14">
    <location>
        <begin position="272"/>
        <end position="275"/>
    </location>
</feature>
<feature type="helix" evidence="14">
    <location>
        <begin position="277"/>
        <end position="284"/>
    </location>
</feature>
<feature type="strand" evidence="14">
    <location>
        <begin position="286"/>
        <end position="289"/>
    </location>
</feature>
<feature type="helix" evidence="14">
    <location>
        <begin position="291"/>
        <end position="298"/>
    </location>
</feature>
<feature type="helix" evidence="14">
    <location>
        <begin position="309"/>
        <end position="329"/>
    </location>
</feature>
<feature type="strand" evidence="14">
    <location>
        <begin position="332"/>
        <end position="336"/>
    </location>
</feature>
<feature type="helix" evidence="14">
    <location>
        <begin position="338"/>
        <end position="340"/>
    </location>
</feature>
<feature type="helix" evidence="14">
    <location>
        <begin position="341"/>
        <end position="364"/>
    </location>
</feature>
<feature type="helix" evidence="14">
    <location>
        <begin position="367"/>
        <end position="382"/>
    </location>
</feature>
<feature type="helix" evidence="14">
    <location>
        <begin position="385"/>
        <end position="409"/>
    </location>
</feature>
<feature type="helix" evidence="14">
    <location>
        <begin position="410"/>
        <end position="412"/>
    </location>
</feature>
<protein>
    <recommendedName>
        <fullName>Protein tweety homolog 2</fullName>
        <shortName>mTTY2</shortName>
    </recommendedName>
    <alternativeName>
        <fullName evidence="7">Volume-regulated anion channel subunit Ttyh2</fullName>
    </alternativeName>
</protein>
<evidence type="ECO:0000250" key="1">
    <source>
        <dbReference type="UniProtKB" id="Q7ZWN9"/>
    </source>
</evidence>
<evidence type="ECO:0000250" key="2">
    <source>
        <dbReference type="UniProtKB" id="Q9BSA4"/>
    </source>
</evidence>
<evidence type="ECO:0000255" key="3"/>
<evidence type="ECO:0000269" key="4">
    <source>
    </source>
</evidence>
<evidence type="ECO:0000269" key="5">
    <source>
    </source>
</evidence>
<evidence type="ECO:0000303" key="6">
    <source>
    </source>
</evidence>
<evidence type="ECO:0000303" key="7">
    <source>
    </source>
</evidence>
<evidence type="ECO:0000305" key="8"/>
<evidence type="ECO:0000305" key="9">
    <source>
    </source>
</evidence>
<evidence type="ECO:0007744" key="10">
    <source>
        <dbReference type="PDB" id="7RTT"/>
    </source>
</evidence>
<evidence type="ECO:0007744" key="11">
    <source>
        <dbReference type="PDB" id="7RTU"/>
    </source>
</evidence>
<evidence type="ECO:0007744" key="12">
    <source>
        <dbReference type="PDB" id="7RTV"/>
    </source>
</evidence>
<evidence type="ECO:0007744" key="13">
    <source>
    </source>
</evidence>
<evidence type="ECO:0007829" key="14">
    <source>
        <dbReference type="PDB" id="7RTT"/>
    </source>
</evidence>
<name>TTYH2_MOUSE</name>
<dbReference type="EMBL" id="AF329682">
    <property type="protein sequence ID" value="AAL16785.1"/>
    <property type="molecule type" value="mRNA"/>
</dbReference>
<dbReference type="EMBL" id="AK152172">
    <property type="protein sequence ID" value="BAE31004.1"/>
    <property type="molecule type" value="mRNA"/>
</dbReference>
<dbReference type="EMBL" id="AK155166">
    <property type="protein sequence ID" value="BAE33089.1"/>
    <property type="molecule type" value="mRNA"/>
</dbReference>
<dbReference type="EMBL" id="AK156393">
    <property type="protein sequence ID" value="BAE33698.1"/>
    <property type="molecule type" value="mRNA"/>
</dbReference>
<dbReference type="EMBL" id="AK168408">
    <property type="protein sequence ID" value="BAE40325.1"/>
    <property type="molecule type" value="mRNA"/>
</dbReference>
<dbReference type="EMBL" id="AL645484">
    <property type="status" value="NOT_ANNOTATED_CDS"/>
    <property type="molecule type" value="Genomic_DNA"/>
</dbReference>
<dbReference type="EMBL" id="AL663079">
    <property type="status" value="NOT_ANNOTATED_CDS"/>
    <property type="molecule type" value="Genomic_DNA"/>
</dbReference>
<dbReference type="EMBL" id="BC060740">
    <property type="protein sequence ID" value="AAH60740.1"/>
    <property type="molecule type" value="mRNA"/>
</dbReference>
<dbReference type="CCDS" id="CCDS25608.1">
    <molecule id="Q3TH73-1"/>
</dbReference>
<dbReference type="RefSeq" id="NP_444503.2">
    <molecule id="Q3TH73-1"/>
    <property type="nucleotide sequence ID" value="NM_053273.2"/>
</dbReference>
<dbReference type="PDB" id="7RTT">
    <property type="method" value="EM"/>
    <property type="resolution" value="3.50 A"/>
    <property type="chains" value="A/B=2-532"/>
</dbReference>
<dbReference type="PDB" id="7RTU">
    <property type="method" value="EM"/>
    <property type="resolution" value="3.89 A"/>
    <property type="chains" value="A/B=2-532"/>
</dbReference>
<dbReference type="PDB" id="7RTV">
    <property type="method" value="EM"/>
    <property type="resolution" value="3.96 A"/>
    <property type="chains" value="A=2-532"/>
</dbReference>
<dbReference type="PDBsum" id="7RTT"/>
<dbReference type="PDBsum" id="7RTU"/>
<dbReference type="PDBsum" id="7RTV"/>
<dbReference type="EMDB" id="EMD-24688"/>
<dbReference type="EMDB" id="EMD-24689"/>
<dbReference type="EMDB" id="EMD-24690"/>
<dbReference type="SMR" id="Q3TH73"/>
<dbReference type="FunCoup" id="Q3TH73">
    <property type="interactions" value="951"/>
</dbReference>
<dbReference type="STRING" id="10090.ENSMUSP00000037821"/>
<dbReference type="GlyCosmos" id="Q3TH73">
    <property type="glycosylation" value="1 site, No reported glycans"/>
</dbReference>
<dbReference type="GlyGen" id="Q3TH73">
    <property type="glycosylation" value="3 sites"/>
</dbReference>
<dbReference type="iPTMnet" id="Q3TH73"/>
<dbReference type="PhosphoSitePlus" id="Q3TH73"/>
<dbReference type="SwissPalm" id="Q3TH73"/>
<dbReference type="jPOST" id="Q3TH73"/>
<dbReference type="PaxDb" id="10090-ENSMUSP00000037821"/>
<dbReference type="PeptideAtlas" id="Q3TH73"/>
<dbReference type="ProteomicsDB" id="300056">
    <molecule id="Q3TH73-1"/>
</dbReference>
<dbReference type="ProteomicsDB" id="300057">
    <molecule id="Q3TH73-2"/>
</dbReference>
<dbReference type="Pumba" id="Q3TH73"/>
<dbReference type="Antibodypedia" id="61709">
    <property type="antibodies" value="25 antibodies from 16 providers"/>
</dbReference>
<dbReference type="DNASU" id="117160"/>
<dbReference type="Ensembl" id="ENSMUST00000045779.6">
    <molecule id="Q3TH73-1"/>
    <property type="protein sequence ID" value="ENSMUSP00000037821.6"/>
    <property type="gene ID" value="ENSMUSG00000034714.10"/>
</dbReference>
<dbReference type="GeneID" id="117160"/>
<dbReference type="KEGG" id="mmu:117160"/>
<dbReference type="UCSC" id="uc007mfm.1">
    <molecule id="Q3TH73-1"/>
    <property type="organism name" value="mouse"/>
</dbReference>
<dbReference type="UCSC" id="uc011yhf.1">
    <molecule id="Q3TH73-2"/>
    <property type="organism name" value="mouse"/>
</dbReference>
<dbReference type="AGR" id="MGI:2157091"/>
<dbReference type="CTD" id="94015"/>
<dbReference type="MGI" id="MGI:2157091">
    <property type="gene designation" value="Ttyh2"/>
</dbReference>
<dbReference type="VEuPathDB" id="HostDB:ENSMUSG00000034714"/>
<dbReference type="eggNOG" id="KOG4433">
    <property type="taxonomic scope" value="Eukaryota"/>
</dbReference>
<dbReference type="GeneTree" id="ENSGT00950000183060"/>
<dbReference type="HOGENOM" id="CLU_023758_0_1_1"/>
<dbReference type="InParanoid" id="Q3TH73"/>
<dbReference type="OMA" id="MRATYMS"/>
<dbReference type="OrthoDB" id="187568at2759"/>
<dbReference type="PhylomeDB" id="Q3TH73"/>
<dbReference type="TreeFam" id="TF319025"/>
<dbReference type="Reactome" id="R-MMU-2672351">
    <property type="pathway name" value="Stimuli-sensing channels"/>
</dbReference>
<dbReference type="BioGRID-ORCS" id="117160">
    <property type="hits" value="4 hits in 80 CRISPR screens"/>
</dbReference>
<dbReference type="ChiTaRS" id="Ttyh2">
    <property type="organism name" value="mouse"/>
</dbReference>
<dbReference type="PRO" id="PR:Q3TH73"/>
<dbReference type="Proteomes" id="UP000000589">
    <property type="component" value="Chromosome 11"/>
</dbReference>
<dbReference type="RNAct" id="Q3TH73">
    <property type="molecule type" value="protein"/>
</dbReference>
<dbReference type="Bgee" id="ENSMUSG00000034714">
    <property type="expression patterns" value="Expressed in lumbar subsegment of spinal cord and 232 other cell types or tissues"/>
</dbReference>
<dbReference type="GO" id="GO:0034707">
    <property type="term" value="C:chloride channel complex"/>
    <property type="evidence" value="ECO:0007669"/>
    <property type="project" value="UniProtKB-KW"/>
</dbReference>
<dbReference type="GO" id="GO:0016020">
    <property type="term" value="C:membrane"/>
    <property type="evidence" value="ECO:0000250"/>
    <property type="project" value="MGI"/>
</dbReference>
<dbReference type="GO" id="GO:0005886">
    <property type="term" value="C:plasma membrane"/>
    <property type="evidence" value="ECO:0000314"/>
    <property type="project" value="UniProtKB"/>
</dbReference>
<dbReference type="GO" id="GO:0005509">
    <property type="term" value="F:calcium ion binding"/>
    <property type="evidence" value="ECO:0000314"/>
    <property type="project" value="UniProtKB"/>
</dbReference>
<dbReference type="GO" id="GO:0072320">
    <property type="term" value="F:volume-sensitive chloride channel activity"/>
    <property type="evidence" value="ECO:0000314"/>
    <property type="project" value="UniProtKB"/>
</dbReference>
<dbReference type="GO" id="GO:0015813">
    <property type="term" value="P:L-glutamate transmembrane transport"/>
    <property type="evidence" value="ECO:0000314"/>
    <property type="project" value="UniProtKB"/>
</dbReference>
<dbReference type="CDD" id="cd07912">
    <property type="entry name" value="Tweety_N"/>
    <property type="match status" value="1"/>
</dbReference>
<dbReference type="InterPro" id="IPR006990">
    <property type="entry name" value="Tweety"/>
</dbReference>
<dbReference type="PANTHER" id="PTHR12424:SF6">
    <property type="entry name" value="PROTEIN TWEETY HOMOLOG 2"/>
    <property type="match status" value="1"/>
</dbReference>
<dbReference type="PANTHER" id="PTHR12424">
    <property type="entry name" value="TWEETY-RELATED"/>
    <property type="match status" value="1"/>
</dbReference>
<dbReference type="Pfam" id="PF04906">
    <property type="entry name" value="Tweety"/>
    <property type="match status" value="1"/>
</dbReference>
<keyword id="KW-0002">3D-structure</keyword>
<keyword id="KW-0025">Alternative splicing</keyword>
<keyword id="KW-0106">Calcium</keyword>
<keyword id="KW-1003">Cell membrane</keyword>
<keyword id="KW-0868">Chloride</keyword>
<keyword id="KW-0869">Chloride channel</keyword>
<keyword id="KW-1015">Disulfide bond</keyword>
<keyword id="KW-0325">Glycoprotein</keyword>
<keyword id="KW-0407">Ion channel</keyword>
<keyword id="KW-0406">Ion transport</keyword>
<keyword id="KW-0472">Membrane</keyword>
<keyword id="KW-0597">Phosphoprotein</keyword>
<keyword id="KW-1185">Reference proteome</keyword>
<keyword id="KW-0812">Transmembrane</keyword>
<keyword id="KW-1133">Transmembrane helix</keyword>
<keyword id="KW-0813">Transport</keyword>
<keyword id="KW-0832">Ubl conjugation</keyword>
<organism>
    <name type="scientific">Mus musculus</name>
    <name type="common">Mouse</name>
    <dbReference type="NCBI Taxonomy" id="10090"/>
    <lineage>
        <taxon>Eukaryota</taxon>
        <taxon>Metazoa</taxon>
        <taxon>Chordata</taxon>
        <taxon>Craniata</taxon>
        <taxon>Vertebrata</taxon>
        <taxon>Euteleostomi</taxon>
        <taxon>Mammalia</taxon>
        <taxon>Eutheria</taxon>
        <taxon>Euarchontoglires</taxon>
        <taxon>Glires</taxon>
        <taxon>Rodentia</taxon>
        <taxon>Myomorpha</taxon>
        <taxon>Muroidea</taxon>
        <taxon>Muridae</taxon>
        <taxon>Murinae</taxon>
        <taxon>Mus</taxon>
        <taxon>Mus</taxon>
    </lineage>
</organism>
<accession>Q3TH73</accession>
<accession>Q3U103</accession>
<accession>Q3U8L3</accession>
<accession>Q6P9J3</accession>
<accession>Q920A8</accession>
<comment type="function">
    <text evidence="2 4">Calcium-independent, swelling-dependent volume-regulated anion channel (VRAC-swell) which plays a pivotal role in the process of regulatory volume decrease (RVD) in the brain through the efflux of anions like chloride and organic osmolytes like glutamate (PubMed:31138989). Probable large-conductance Ca(2+)-activated chloride channel (By similarity).</text>
</comment>
<comment type="catalytic activity">
    <reaction evidence="4">
        <text>chloride(in) = chloride(out)</text>
        <dbReference type="Rhea" id="RHEA:29823"/>
        <dbReference type="ChEBI" id="CHEBI:17996"/>
    </reaction>
</comment>
<comment type="catalytic activity">
    <reaction evidence="4">
        <text>L-glutamate(out) = L-glutamate(in)</text>
        <dbReference type="Rhea" id="RHEA:66336"/>
        <dbReference type="ChEBI" id="CHEBI:29985"/>
    </reaction>
    <physiologicalReaction direction="right-to-left" evidence="9">
        <dbReference type="Rhea" id="RHEA:66338"/>
    </physiologicalReaction>
</comment>
<comment type="activity regulation">
    <text evidence="4">Inhibited by (4-[(2-butyl-6,7-dichloro-2- cyclopentyl-2,3-dihydro-1-oxo-1H-inden-5-yl)oxy]butanoic acid).</text>
</comment>
<comment type="subunit">
    <text evidence="1 5">Forms cis-homodimers in the presence of Ca(+2) and forms monomers and trans-dimers in the absence of Ca(2+) (PubMed:34824283). Interacts with NEDD4L (By similarity).</text>
</comment>
<comment type="subcellular location">
    <subcellularLocation>
        <location evidence="4">Cell membrane</location>
        <topology evidence="3">Multi-pass membrane protein</topology>
    </subcellularLocation>
</comment>
<comment type="alternative products">
    <event type="alternative splicing"/>
    <isoform>
        <id>Q3TH73-1</id>
        <name>1</name>
        <sequence type="displayed"/>
    </isoform>
    <isoform>
        <id>Q3TH73-2</id>
        <name>2</name>
        <sequence type="described" ref="VSP_029768"/>
    </isoform>
</comment>
<comment type="PTM">
    <text evidence="1">Ubiquitinated by NEDD4L, leading to its proteasomal degradation.</text>
</comment>
<comment type="similarity">
    <text evidence="8">Belongs to the tweety family.</text>
</comment>
<comment type="caution">
    <text evidence="5">According to PubMed:34824283, lacks swelling-dependent volume-regulated anion channel activity.</text>
</comment>